<evidence type="ECO:0000255" key="1">
    <source>
        <dbReference type="HAMAP-Rule" id="MF_00193"/>
    </source>
</evidence>
<accession>B0TK55</accession>
<name>NADE_SHEHH</name>
<protein>
    <recommendedName>
        <fullName evidence="1">NH(3)-dependent NAD(+) synthetase</fullName>
        <ecNumber evidence="1">6.3.1.5</ecNumber>
    </recommendedName>
</protein>
<gene>
    <name evidence="1" type="primary">nadE</name>
    <name type="ordered locus">Shal_2517</name>
</gene>
<sequence length="276" mass="30228">MKGQILREMKVLKAIDPAFEVQRRVAFIKSKLKQSSTTSLVLGISGGVDSSVGGRLCQLAVDELNSESQSSSYQFIAVRLPYDVQKDEDEAQLACQFIQPSKQVTVNVKLGVDGVHSETLAAIEAAGIALPEHDKIDFVKGNVKARMRMVAQYDIAGLVGGLVVGTDHSAENITGFYTKWGDGACDLAPLFGLNKRQVRQLADYLGAPEVLVSKAPTADLEEEHPQQEDEEALGLTYEQIDDFLEGKVVSNFVNDKLISMYLATQHKREPIPTIYD</sequence>
<organism>
    <name type="scientific">Shewanella halifaxensis (strain HAW-EB4)</name>
    <dbReference type="NCBI Taxonomy" id="458817"/>
    <lineage>
        <taxon>Bacteria</taxon>
        <taxon>Pseudomonadati</taxon>
        <taxon>Pseudomonadota</taxon>
        <taxon>Gammaproteobacteria</taxon>
        <taxon>Alteromonadales</taxon>
        <taxon>Shewanellaceae</taxon>
        <taxon>Shewanella</taxon>
    </lineage>
</organism>
<comment type="function">
    <text evidence="1">Catalyzes the ATP-dependent amidation of deamido-NAD to form NAD. Uses ammonia as a nitrogen source.</text>
</comment>
<comment type="catalytic activity">
    <reaction evidence="1">
        <text>deamido-NAD(+) + NH4(+) + ATP = AMP + diphosphate + NAD(+) + H(+)</text>
        <dbReference type="Rhea" id="RHEA:21188"/>
        <dbReference type="ChEBI" id="CHEBI:15378"/>
        <dbReference type="ChEBI" id="CHEBI:28938"/>
        <dbReference type="ChEBI" id="CHEBI:30616"/>
        <dbReference type="ChEBI" id="CHEBI:33019"/>
        <dbReference type="ChEBI" id="CHEBI:57540"/>
        <dbReference type="ChEBI" id="CHEBI:58437"/>
        <dbReference type="ChEBI" id="CHEBI:456215"/>
        <dbReference type="EC" id="6.3.1.5"/>
    </reaction>
</comment>
<comment type="pathway">
    <text evidence="1">Cofactor biosynthesis; NAD(+) biosynthesis; NAD(+) from deamido-NAD(+) (ammonia route): step 1/1.</text>
</comment>
<comment type="subunit">
    <text evidence="1">Homodimer.</text>
</comment>
<comment type="similarity">
    <text evidence="1">Belongs to the NAD synthetase family.</text>
</comment>
<proteinExistence type="inferred from homology"/>
<reference key="1">
    <citation type="submission" date="2008-01" db="EMBL/GenBank/DDBJ databases">
        <title>Complete sequence of Shewanella halifaxensis HAW-EB4.</title>
        <authorList>
            <consortium name="US DOE Joint Genome Institute"/>
            <person name="Copeland A."/>
            <person name="Lucas S."/>
            <person name="Lapidus A."/>
            <person name="Glavina del Rio T."/>
            <person name="Dalin E."/>
            <person name="Tice H."/>
            <person name="Bruce D."/>
            <person name="Goodwin L."/>
            <person name="Pitluck S."/>
            <person name="Sims D."/>
            <person name="Brettin T."/>
            <person name="Detter J.C."/>
            <person name="Han C."/>
            <person name="Kuske C.R."/>
            <person name="Schmutz J."/>
            <person name="Larimer F."/>
            <person name="Land M."/>
            <person name="Hauser L."/>
            <person name="Kyrpides N."/>
            <person name="Kim E."/>
            <person name="Zhao J.-S."/>
            <person name="Richardson P."/>
        </authorList>
    </citation>
    <scope>NUCLEOTIDE SEQUENCE [LARGE SCALE GENOMIC DNA]</scope>
    <source>
        <strain>HAW-EB4</strain>
    </source>
</reference>
<dbReference type="EC" id="6.3.1.5" evidence="1"/>
<dbReference type="EMBL" id="CP000931">
    <property type="protein sequence ID" value="ABZ77074.1"/>
    <property type="molecule type" value="Genomic_DNA"/>
</dbReference>
<dbReference type="RefSeq" id="WP_012277602.1">
    <property type="nucleotide sequence ID" value="NC_010334.1"/>
</dbReference>
<dbReference type="SMR" id="B0TK55"/>
<dbReference type="STRING" id="458817.Shal_2517"/>
<dbReference type="KEGG" id="shl:Shal_2517"/>
<dbReference type="eggNOG" id="COG0171">
    <property type="taxonomic scope" value="Bacteria"/>
</dbReference>
<dbReference type="HOGENOM" id="CLU_059327_3_0_6"/>
<dbReference type="OrthoDB" id="3266517at2"/>
<dbReference type="UniPathway" id="UPA00253">
    <property type="reaction ID" value="UER00333"/>
</dbReference>
<dbReference type="Proteomes" id="UP000001317">
    <property type="component" value="Chromosome"/>
</dbReference>
<dbReference type="GO" id="GO:0005737">
    <property type="term" value="C:cytoplasm"/>
    <property type="evidence" value="ECO:0007669"/>
    <property type="project" value="InterPro"/>
</dbReference>
<dbReference type="GO" id="GO:0005524">
    <property type="term" value="F:ATP binding"/>
    <property type="evidence" value="ECO:0007669"/>
    <property type="project" value="UniProtKB-UniRule"/>
</dbReference>
<dbReference type="GO" id="GO:0004359">
    <property type="term" value="F:glutaminase activity"/>
    <property type="evidence" value="ECO:0007669"/>
    <property type="project" value="InterPro"/>
</dbReference>
<dbReference type="GO" id="GO:0046872">
    <property type="term" value="F:metal ion binding"/>
    <property type="evidence" value="ECO:0007669"/>
    <property type="project" value="UniProtKB-KW"/>
</dbReference>
<dbReference type="GO" id="GO:0003952">
    <property type="term" value="F:NAD+ synthase (glutamine-hydrolyzing) activity"/>
    <property type="evidence" value="ECO:0007669"/>
    <property type="project" value="InterPro"/>
</dbReference>
<dbReference type="GO" id="GO:0008795">
    <property type="term" value="F:NAD+ synthase activity"/>
    <property type="evidence" value="ECO:0007669"/>
    <property type="project" value="UniProtKB-UniRule"/>
</dbReference>
<dbReference type="GO" id="GO:0009435">
    <property type="term" value="P:NAD biosynthetic process"/>
    <property type="evidence" value="ECO:0007669"/>
    <property type="project" value="UniProtKB-UniRule"/>
</dbReference>
<dbReference type="CDD" id="cd00553">
    <property type="entry name" value="NAD_synthase"/>
    <property type="match status" value="1"/>
</dbReference>
<dbReference type="FunFam" id="3.40.50.620:FF:000015">
    <property type="entry name" value="NH(3)-dependent NAD(+) synthetase"/>
    <property type="match status" value="1"/>
</dbReference>
<dbReference type="Gene3D" id="3.40.50.620">
    <property type="entry name" value="HUPs"/>
    <property type="match status" value="1"/>
</dbReference>
<dbReference type="HAMAP" id="MF_00193">
    <property type="entry name" value="NadE_ammonia_dep"/>
    <property type="match status" value="1"/>
</dbReference>
<dbReference type="InterPro" id="IPR022310">
    <property type="entry name" value="NAD/GMP_synthase"/>
</dbReference>
<dbReference type="InterPro" id="IPR003694">
    <property type="entry name" value="NAD_synthase"/>
</dbReference>
<dbReference type="InterPro" id="IPR022926">
    <property type="entry name" value="NH(3)-dep_NAD(+)_synth"/>
</dbReference>
<dbReference type="InterPro" id="IPR014729">
    <property type="entry name" value="Rossmann-like_a/b/a_fold"/>
</dbReference>
<dbReference type="NCBIfam" id="TIGR00552">
    <property type="entry name" value="nadE"/>
    <property type="match status" value="1"/>
</dbReference>
<dbReference type="NCBIfam" id="NF001979">
    <property type="entry name" value="PRK00768.1"/>
    <property type="match status" value="1"/>
</dbReference>
<dbReference type="PANTHER" id="PTHR23090">
    <property type="entry name" value="NH 3 /GLUTAMINE-DEPENDENT NAD + SYNTHETASE"/>
    <property type="match status" value="1"/>
</dbReference>
<dbReference type="PANTHER" id="PTHR23090:SF7">
    <property type="entry name" value="NH(3)-DEPENDENT NAD(+) SYNTHETASE"/>
    <property type="match status" value="1"/>
</dbReference>
<dbReference type="Pfam" id="PF02540">
    <property type="entry name" value="NAD_synthase"/>
    <property type="match status" value="1"/>
</dbReference>
<dbReference type="SUPFAM" id="SSF52402">
    <property type="entry name" value="Adenine nucleotide alpha hydrolases-like"/>
    <property type="match status" value="1"/>
</dbReference>
<keyword id="KW-0067">ATP-binding</keyword>
<keyword id="KW-0436">Ligase</keyword>
<keyword id="KW-0460">Magnesium</keyword>
<keyword id="KW-0479">Metal-binding</keyword>
<keyword id="KW-0520">NAD</keyword>
<keyword id="KW-0547">Nucleotide-binding</keyword>
<feature type="chain" id="PRO_1000077603" description="NH(3)-dependent NAD(+) synthetase">
    <location>
        <begin position="1"/>
        <end position="276"/>
    </location>
</feature>
<feature type="binding site" evidence="1">
    <location>
        <begin position="43"/>
        <end position="50"/>
    </location>
    <ligand>
        <name>ATP</name>
        <dbReference type="ChEBI" id="CHEBI:30616"/>
    </ligand>
</feature>
<feature type="binding site" evidence="1">
    <location>
        <position position="49"/>
    </location>
    <ligand>
        <name>Mg(2+)</name>
        <dbReference type="ChEBI" id="CHEBI:18420"/>
    </ligand>
</feature>
<feature type="binding site" evidence="1">
    <location>
        <position position="146"/>
    </location>
    <ligand>
        <name>deamido-NAD(+)</name>
        <dbReference type="ChEBI" id="CHEBI:58437"/>
    </ligand>
</feature>
<feature type="binding site" evidence="1">
    <location>
        <position position="166"/>
    </location>
    <ligand>
        <name>ATP</name>
        <dbReference type="ChEBI" id="CHEBI:30616"/>
    </ligand>
</feature>
<feature type="binding site" evidence="1">
    <location>
        <position position="171"/>
    </location>
    <ligand>
        <name>Mg(2+)</name>
        <dbReference type="ChEBI" id="CHEBI:18420"/>
    </ligand>
</feature>
<feature type="binding site" evidence="1">
    <location>
        <position position="179"/>
    </location>
    <ligand>
        <name>deamido-NAD(+)</name>
        <dbReference type="ChEBI" id="CHEBI:58437"/>
    </ligand>
</feature>
<feature type="binding site" evidence="1">
    <location>
        <position position="186"/>
    </location>
    <ligand>
        <name>deamido-NAD(+)</name>
        <dbReference type="ChEBI" id="CHEBI:58437"/>
    </ligand>
</feature>
<feature type="binding site" evidence="1">
    <location>
        <position position="195"/>
    </location>
    <ligand>
        <name>ATP</name>
        <dbReference type="ChEBI" id="CHEBI:30616"/>
    </ligand>
</feature>
<feature type="binding site" evidence="1">
    <location>
        <position position="217"/>
    </location>
    <ligand>
        <name>ATP</name>
        <dbReference type="ChEBI" id="CHEBI:30616"/>
    </ligand>
</feature>
<feature type="binding site" evidence="1">
    <location>
        <begin position="266"/>
        <end position="267"/>
    </location>
    <ligand>
        <name>deamido-NAD(+)</name>
        <dbReference type="ChEBI" id="CHEBI:58437"/>
    </ligand>
</feature>